<comment type="function">
    <text>HMWC (high-molecular-weight cytochrome c precursor), ORF2, ORF3, ORF4, ORF5, ORF6 in the HMC operon form a transmembrane protein complex that allows electron flow from the periplasmic hydrogenase to the cytoplasmic enzymes that catalyze reduction of sulfates. ORF2 is a transmembrane redox protein.</text>
</comment>
<comment type="subcellular location">
    <subcellularLocation>
        <location>Cell membrane</location>
        <topology>Single-pass membrane protein</topology>
    </subcellularLocation>
</comment>
<accession>P33389</accession>
<proteinExistence type="predicted"/>
<keyword id="KW-0004">4Fe-4S</keyword>
<keyword id="KW-1003">Cell membrane</keyword>
<keyword id="KW-0249">Electron transport</keyword>
<keyword id="KW-0408">Iron</keyword>
<keyword id="KW-0411">Iron-sulfur</keyword>
<keyword id="KW-0472">Membrane</keyword>
<keyword id="KW-0479">Metal-binding</keyword>
<keyword id="KW-1185">Reference proteome</keyword>
<keyword id="KW-0677">Repeat</keyword>
<keyword id="KW-0812">Transmembrane</keyword>
<keyword id="KW-1133">Transmembrane helix</keyword>
<keyword id="KW-0813">Transport</keyword>
<organism>
    <name type="scientific">Nitratidesulfovibrio vulgaris (strain ATCC 29579 / DSM 644 / CCUG 34227 / NCIMB 8303 / VKM B-1760 / Hildenborough)</name>
    <name type="common">Desulfovibrio vulgaris</name>
    <dbReference type="NCBI Taxonomy" id="882"/>
    <lineage>
        <taxon>Bacteria</taxon>
        <taxon>Pseudomonadati</taxon>
        <taxon>Thermodesulfobacteriota</taxon>
        <taxon>Desulfovibrionia</taxon>
        <taxon>Desulfovibrionales</taxon>
        <taxon>Desulfovibrionaceae</taxon>
        <taxon>Nitratidesulfovibrio</taxon>
    </lineage>
</organism>
<sequence length="370" mass="40072">MDRRRFLTLLGSAGLTATVATAGTAKAASTGTFPGYKDSYGVLHDTTRCIGCRKCEQACNEVNKLPAPKAKFDDLTVLEKTRRTDADSWTVVNRYNAAGLDHPVFRKQQCNHCLEPACASACFVKAFTKNPDGSVTYDGSLCVGCRYCMVACPFNVPAFQYAEAFDPLIQKCTMCHPRLAEGKLPGCVEICPKEALTFGRRKDLVRIAHDRIRQNPGRYIDHVYGEQEMGGTAWMYLSGVPFSATGMNEELGTKSAPEYTAGALGAVPMVVGIWPILLTGAYAITKRKEKIAAEEQAEAVKQAVAASRAEADDKLKAALAKADKDKEAAVTREVKKAVDEARKTFEEELAAKEQPEAPEGDDAGKPGEDA</sequence>
<gene>
    <name type="ordered locus">DVU_0535</name>
</gene>
<dbReference type="EMBL" id="L16784">
    <property type="protein sequence ID" value="AAA71995.1"/>
    <property type="molecule type" value="Genomic_DNA"/>
</dbReference>
<dbReference type="EMBL" id="AE017285">
    <property type="protein sequence ID" value="AAS95017.1"/>
    <property type="molecule type" value="Genomic_DNA"/>
</dbReference>
<dbReference type="PIR" id="B40605">
    <property type="entry name" value="B40605"/>
</dbReference>
<dbReference type="RefSeq" id="WP_010937841.1">
    <property type="nucleotide sequence ID" value="NC_002937.3"/>
</dbReference>
<dbReference type="RefSeq" id="YP_009758.1">
    <property type="nucleotide sequence ID" value="NC_002937.3"/>
</dbReference>
<dbReference type="SMR" id="P33389"/>
<dbReference type="STRING" id="882.DVU_0535"/>
<dbReference type="PaxDb" id="882-DVU_0535"/>
<dbReference type="EnsemblBacteria" id="AAS95017">
    <property type="protein sequence ID" value="AAS95017"/>
    <property type="gene ID" value="DVU_0535"/>
</dbReference>
<dbReference type="KEGG" id="dvu:DVU_0535"/>
<dbReference type="PATRIC" id="fig|882.5.peg.511"/>
<dbReference type="eggNOG" id="COG0437">
    <property type="taxonomic scope" value="Bacteria"/>
</dbReference>
<dbReference type="eggNOG" id="COG3064">
    <property type="taxonomic scope" value="Bacteria"/>
</dbReference>
<dbReference type="HOGENOM" id="CLU_043374_0_0_7"/>
<dbReference type="OrthoDB" id="9789030at2"/>
<dbReference type="PhylomeDB" id="P33389"/>
<dbReference type="BioCyc" id="MetaCyc:MONOMER-22163"/>
<dbReference type="Proteomes" id="UP000002194">
    <property type="component" value="Chromosome"/>
</dbReference>
<dbReference type="GO" id="GO:0005886">
    <property type="term" value="C:plasma membrane"/>
    <property type="evidence" value="ECO:0007669"/>
    <property type="project" value="UniProtKB-SubCell"/>
</dbReference>
<dbReference type="GO" id="GO:0051539">
    <property type="term" value="F:4 iron, 4 sulfur cluster binding"/>
    <property type="evidence" value="ECO:0007669"/>
    <property type="project" value="UniProtKB-KW"/>
</dbReference>
<dbReference type="GO" id="GO:0046872">
    <property type="term" value="F:metal ion binding"/>
    <property type="evidence" value="ECO:0007669"/>
    <property type="project" value="UniProtKB-KW"/>
</dbReference>
<dbReference type="CDD" id="cd10561">
    <property type="entry name" value="HybA_like"/>
    <property type="match status" value="1"/>
</dbReference>
<dbReference type="Gene3D" id="3.30.70.20">
    <property type="match status" value="2"/>
</dbReference>
<dbReference type="InterPro" id="IPR017896">
    <property type="entry name" value="4Fe4S_Fe-S-bd"/>
</dbReference>
<dbReference type="InterPro" id="IPR017900">
    <property type="entry name" value="4Fe4S_Fe_S_CS"/>
</dbReference>
<dbReference type="InterPro" id="IPR051555">
    <property type="entry name" value="FDH_Electron_Transfer_Unit"/>
</dbReference>
<dbReference type="InterPro" id="IPR054814">
    <property type="entry name" value="HmcB"/>
</dbReference>
<dbReference type="InterPro" id="IPR006311">
    <property type="entry name" value="TAT_signal"/>
</dbReference>
<dbReference type="NCBIfam" id="NF045715">
    <property type="entry name" value="sulf_resp_HmcB"/>
    <property type="match status" value="1"/>
</dbReference>
<dbReference type="PANTHER" id="PTHR43545">
    <property type="entry name" value="FORMATE DEHYDROGENASE, NITRATE-INDUCIBLE, IRON-SULFUR SUBUNIT"/>
    <property type="match status" value="1"/>
</dbReference>
<dbReference type="PANTHER" id="PTHR43545:SF4">
    <property type="entry name" value="IRON-SULFUR PROTEIN"/>
    <property type="match status" value="1"/>
</dbReference>
<dbReference type="Pfam" id="PF13247">
    <property type="entry name" value="Fer4_11"/>
    <property type="match status" value="1"/>
</dbReference>
<dbReference type="SUPFAM" id="SSF54862">
    <property type="entry name" value="4Fe-4S ferredoxins"/>
    <property type="match status" value="1"/>
</dbReference>
<dbReference type="PROSITE" id="PS00198">
    <property type="entry name" value="4FE4S_FER_1"/>
    <property type="match status" value="1"/>
</dbReference>
<dbReference type="PROSITE" id="PS51379">
    <property type="entry name" value="4FE4S_FER_2"/>
    <property type="match status" value="3"/>
</dbReference>
<dbReference type="PROSITE" id="PS51318">
    <property type="entry name" value="TAT"/>
    <property type="match status" value="1"/>
</dbReference>
<reference key="1">
    <citation type="journal article" date="1993" name="J. Bacteriol.">
        <title>The hmc operon of Desulfovibrio vulgaris subsp. vulgaris Hildenborough encodes a potential transmembrane redox protein complex.</title>
        <authorList>
            <person name="Rossi M."/>
            <person name="Pollock W.B.R."/>
            <person name="Reij M.W."/>
            <person name="Keon R.G."/>
            <person name="Fu R."/>
            <person name="Voordouw G."/>
        </authorList>
    </citation>
    <scope>NUCLEOTIDE SEQUENCE [GENOMIC DNA]</scope>
</reference>
<reference key="2">
    <citation type="journal article" date="2004" name="Nat. Biotechnol.">
        <title>The genome sequence of the anaerobic, sulfate-reducing bacterium Desulfovibrio vulgaris Hildenborough.</title>
        <authorList>
            <person name="Heidelberg J.F."/>
            <person name="Seshadri R."/>
            <person name="Haveman S.A."/>
            <person name="Hemme C.L."/>
            <person name="Paulsen I.T."/>
            <person name="Kolonay J.F."/>
            <person name="Eisen J.A."/>
            <person name="Ward N.L."/>
            <person name="Methe B.A."/>
            <person name="Brinkac L.M."/>
            <person name="Daugherty S.C."/>
            <person name="DeBoy R.T."/>
            <person name="Dodson R.J."/>
            <person name="Durkin A.S."/>
            <person name="Madupu R."/>
            <person name="Nelson W.C."/>
            <person name="Sullivan S.A."/>
            <person name="Fouts D.E."/>
            <person name="Haft D.H."/>
            <person name="Selengut J."/>
            <person name="Peterson J.D."/>
            <person name="Davidsen T.M."/>
            <person name="Zafar N."/>
            <person name="Zhou L."/>
            <person name="Radune D."/>
            <person name="Dimitrov G."/>
            <person name="Hance M."/>
            <person name="Tran K."/>
            <person name="Khouri H.M."/>
            <person name="Gill J."/>
            <person name="Utterback T.R."/>
            <person name="Feldblyum T.V."/>
            <person name="Wall J.D."/>
            <person name="Voordouw G."/>
            <person name="Fraser C.M."/>
        </authorList>
    </citation>
    <scope>NUCLEOTIDE SEQUENCE [LARGE SCALE GENOMIC DNA]</scope>
    <source>
        <strain>ATCC 29579 / DSM 644 / CCUG 34227 / NCIMB 8303 / VKM B-1760 / Hildenborough</strain>
    </source>
</reference>
<protein>
    <recommendedName>
        <fullName>Protein DVU_0535</fullName>
    </recommendedName>
    <alternativeName>
        <fullName>HMC operon ORF 2</fullName>
    </alternativeName>
</protein>
<feature type="chain" id="PRO_0000159255" description="Protein DVU_0535">
    <location>
        <begin position="1"/>
        <end position="370"/>
    </location>
</feature>
<feature type="topological domain" description="Cytoplasmic" evidence="2">
    <location>
        <begin position="1"/>
        <end position="258"/>
    </location>
</feature>
<feature type="transmembrane region" description="Helical" evidence="2">
    <location>
        <begin position="259"/>
        <end position="284"/>
    </location>
</feature>
<feature type="topological domain" description="Periplasmic" evidence="2">
    <location>
        <begin position="285"/>
        <end position="370"/>
    </location>
</feature>
<feature type="domain" description="4Fe-4S ferredoxin-type 1" evidence="3">
    <location>
        <begin position="40"/>
        <end position="70"/>
    </location>
</feature>
<feature type="domain" description="4Fe-4S ferredoxin-type 2" evidence="3">
    <location>
        <begin position="101"/>
        <end position="132"/>
    </location>
</feature>
<feature type="domain" description="4Fe-4S ferredoxin-type 3" evidence="3">
    <location>
        <begin position="133"/>
        <end position="162"/>
    </location>
</feature>
<feature type="region of interest" description="Disordered" evidence="4">
    <location>
        <begin position="345"/>
        <end position="370"/>
    </location>
</feature>
<feature type="compositionally biased region" description="Basic and acidic residues" evidence="4">
    <location>
        <begin position="345"/>
        <end position="355"/>
    </location>
</feature>
<feature type="binding site" evidence="1">
    <location>
        <position position="49"/>
    </location>
    <ligand>
        <name>[4Fe-4S] cluster</name>
        <dbReference type="ChEBI" id="CHEBI:49883"/>
        <label>1</label>
    </ligand>
</feature>
<feature type="binding site" evidence="1">
    <location>
        <position position="52"/>
    </location>
    <ligand>
        <name>[4Fe-4S] cluster</name>
        <dbReference type="ChEBI" id="CHEBI:49883"/>
        <label>1</label>
    </ligand>
</feature>
<feature type="binding site" evidence="1">
    <location>
        <position position="55"/>
    </location>
    <ligand>
        <name>[4Fe-4S] cluster</name>
        <dbReference type="ChEBI" id="CHEBI:49883"/>
        <label>1</label>
    </ligand>
</feature>
<feature type="binding site" evidence="1">
    <location>
        <position position="59"/>
    </location>
    <ligand>
        <name>[4Fe-4S] cluster</name>
        <dbReference type="ChEBI" id="CHEBI:49883"/>
        <label>2</label>
    </ligand>
</feature>
<feature type="binding site" evidence="1">
    <location>
        <position position="110"/>
    </location>
    <ligand>
        <name>[4Fe-4S] cluster</name>
        <dbReference type="ChEBI" id="CHEBI:49883"/>
        <label>3</label>
    </ligand>
</feature>
<feature type="binding site" evidence="1">
    <location>
        <position position="113"/>
    </location>
    <ligand>
        <name>[4Fe-4S] cluster</name>
        <dbReference type="ChEBI" id="CHEBI:49883"/>
        <label>3</label>
    </ligand>
</feature>
<feature type="binding site" evidence="1">
    <location>
        <position position="118"/>
    </location>
    <ligand>
        <name>[4Fe-4S] cluster</name>
        <dbReference type="ChEBI" id="CHEBI:49883"/>
        <label>3</label>
    </ligand>
</feature>
<feature type="binding site" evidence="1">
    <location>
        <position position="122"/>
    </location>
    <ligand>
        <name>[4Fe-4S] cluster</name>
        <dbReference type="ChEBI" id="CHEBI:49883"/>
        <label>4</label>
    </ligand>
</feature>
<feature type="binding site" evidence="1">
    <location>
        <position position="142"/>
    </location>
    <ligand>
        <name>[4Fe-4S] cluster</name>
        <dbReference type="ChEBI" id="CHEBI:49883"/>
        <label>4</label>
    </ligand>
</feature>
<feature type="binding site" evidence="1">
    <location>
        <position position="145"/>
    </location>
    <ligand>
        <name>[4Fe-4S] cluster</name>
        <dbReference type="ChEBI" id="CHEBI:49883"/>
        <label>4</label>
    </ligand>
</feature>
<feature type="binding site" evidence="1">
    <location>
        <position position="148"/>
    </location>
    <ligand>
        <name>[4Fe-4S] cluster</name>
        <dbReference type="ChEBI" id="CHEBI:49883"/>
        <label>4</label>
    </ligand>
</feature>
<feature type="binding site" evidence="1">
    <location>
        <position position="152"/>
    </location>
    <ligand>
        <name>[4Fe-4S] cluster</name>
        <dbReference type="ChEBI" id="CHEBI:49883"/>
        <label>3</label>
    </ligand>
</feature>
<feature type="binding site" evidence="1">
    <location>
        <position position="172"/>
    </location>
    <ligand>
        <name>[4Fe-4S] cluster</name>
        <dbReference type="ChEBI" id="CHEBI:49883"/>
        <label>2</label>
    </ligand>
</feature>
<feature type="binding site" evidence="1">
    <location>
        <position position="175"/>
    </location>
    <ligand>
        <name>[4Fe-4S] cluster</name>
        <dbReference type="ChEBI" id="CHEBI:49883"/>
        <label>2</label>
    </ligand>
</feature>
<feature type="binding site" evidence="1">
    <location>
        <position position="187"/>
    </location>
    <ligand>
        <name>[4Fe-4S] cluster</name>
        <dbReference type="ChEBI" id="CHEBI:49883"/>
        <label>2</label>
    </ligand>
</feature>
<feature type="binding site" evidence="1">
    <location>
        <position position="191"/>
    </location>
    <ligand>
        <name>[4Fe-4S] cluster</name>
        <dbReference type="ChEBI" id="CHEBI:49883"/>
        <label>1</label>
    </ligand>
</feature>
<feature type="sequence conflict" description="In Ref. 1; AAA71995." evidence="5" ref="1">
    <original>T</original>
    <variation>S</variation>
    <location>
        <position position="46"/>
    </location>
</feature>
<evidence type="ECO:0000250" key="1"/>
<evidence type="ECO:0000255" key="2"/>
<evidence type="ECO:0000255" key="3">
    <source>
        <dbReference type="PROSITE-ProRule" id="PRU00711"/>
    </source>
</evidence>
<evidence type="ECO:0000256" key="4">
    <source>
        <dbReference type="SAM" id="MobiDB-lite"/>
    </source>
</evidence>
<evidence type="ECO:0000305" key="5"/>
<name>HMC2_NITV2</name>